<feature type="chain" id="PRO_0000074726" description="Sensor histidine kinase CusS">
    <location>
        <begin position="1"/>
        <end position="482"/>
    </location>
</feature>
<feature type="topological domain" description="Cytoplasmic" evidence="1">
    <location>
        <begin position="1"/>
        <end position="15"/>
    </location>
</feature>
<feature type="transmembrane region" description="Helical" evidence="2">
    <location>
        <begin position="16"/>
        <end position="36"/>
    </location>
</feature>
<feature type="topological domain" description="Periplasmic" evidence="1">
    <location>
        <begin position="37"/>
        <end position="186"/>
    </location>
</feature>
<feature type="transmembrane region" description="Helical" evidence="2">
    <location>
        <begin position="187"/>
        <end position="207"/>
    </location>
</feature>
<feature type="topological domain" description="Cytoplasmic" evidence="1">
    <location>
        <begin position="208"/>
        <end position="482"/>
    </location>
</feature>
<feature type="domain" description="HAMP" evidence="3">
    <location>
        <begin position="207"/>
        <end position="260"/>
    </location>
</feature>
<feature type="domain" description="Histidine kinase" evidence="4">
    <location>
        <begin position="268"/>
        <end position="482"/>
    </location>
</feature>
<feature type="modified residue" description="Phosphohistidine; by autocatalysis" evidence="4">
    <location>
        <position position="271"/>
    </location>
</feature>
<protein>
    <recommendedName>
        <fullName evidence="1">Sensor histidine kinase CusS</fullName>
        <ecNumber evidence="1">2.7.13.3</ecNumber>
    </recommendedName>
</protein>
<comment type="function">
    <text evidence="1">Member of the two-component regulatory system CusS/CusR involved in response to copper and silver. Acts as a copper/silver ion sensor. Activates CusR by phosphorylation.</text>
</comment>
<comment type="catalytic activity">
    <reaction evidence="1">
        <text>ATP + protein L-histidine = ADP + protein N-phospho-L-histidine.</text>
        <dbReference type="EC" id="2.7.13.3"/>
    </reaction>
</comment>
<comment type="subcellular location">
    <subcellularLocation>
        <location evidence="1">Cell inner membrane</location>
        <topology evidence="2">Multi-pass membrane protein</topology>
    </subcellularLocation>
</comment>
<comment type="PTM">
    <text evidence="1">Autophosphorylated.</text>
</comment>
<accession>Q8XBY4</accession>
<dbReference type="EC" id="2.7.13.3" evidence="1"/>
<dbReference type="EMBL" id="AE005174">
    <property type="protein sequence ID" value="AAG54903.1"/>
    <property type="molecule type" value="Genomic_DNA"/>
</dbReference>
<dbReference type="EMBL" id="BA000007">
    <property type="protein sequence ID" value="BAB34031.1"/>
    <property type="molecule type" value="Genomic_DNA"/>
</dbReference>
<dbReference type="PIR" id="C85555">
    <property type="entry name" value="C85555"/>
</dbReference>
<dbReference type="PIR" id="H90704">
    <property type="entry name" value="H90704"/>
</dbReference>
<dbReference type="RefSeq" id="NP_308635.1">
    <property type="nucleotide sequence ID" value="NC_002695.1"/>
</dbReference>
<dbReference type="RefSeq" id="WP_000253799.1">
    <property type="nucleotide sequence ID" value="NZ_SWKA01000005.1"/>
</dbReference>
<dbReference type="SMR" id="Q8XBY4"/>
<dbReference type="STRING" id="155864.Z0708"/>
<dbReference type="GeneID" id="916966"/>
<dbReference type="KEGG" id="ece:Z0708"/>
<dbReference type="KEGG" id="ecs:ECs_0608"/>
<dbReference type="PATRIC" id="fig|386585.9.peg.716"/>
<dbReference type="eggNOG" id="COG5002">
    <property type="taxonomic scope" value="Bacteria"/>
</dbReference>
<dbReference type="HOGENOM" id="CLU_000445_89_6_6"/>
<dbReference type="OMA" id="YANVFIC"/>
<dbReference type="Proteomes" id="UP000000558">
    <property type="component" value="Chromosome"/>
</dbReference>
<dbReference type="Proteomes" id="UP000002519">
    <property type="component" value="Chromosome"/>
</dbReference>
<dbReference type="GO" id="GO:0005886">
    <property type="term" value="C:plasma membrane"/>
    <property type="evidence" value="ECO:0007669"/>
    <property type="project" value="UniProtKB-SubCell"/>
</dbReference>
<dbReference type="GO" id="GO:0005524">
    <property type="term" value="F:ATP binding"/>
    <property type="evidence" value="ECO:0007669"/>
    <property type="project" value="UniProtKB-KW"/>
</dbReference>
<dbReference type="GO" id="GO:0000155">
    <property type="term" value="F:phosphorelay sensor kinase activity"/>
    <property type="evidence" value="ECO:0007669"/>
    <property type="project" value="InterPro"/>
</dbReference>
<dbReference type="CDD" id="cd06225">
    <property type="entry name" value="HAMP"/>
    <property type="match status" value="1"/>
</dbReference>
<dbReference type="CDD" id="cd00082">
    <property type="entry name" value="HisKA"/>
    <property type="match status" value="1"/>
</dbReference>
<dbReference type="FunFam" id="3.30.565.10:FF:000006">
    <property type="entry name" value="Sensor histidine kinase WalK"/>
    <property type="match status" value="1"/>
</dbReference>
<dbReference type="FunFam" id="1.10.287.130:FF:000001">
    <property type="entry name" value="Two-component sensor histidine kinase"/>
    <property type="match status" value="1"/>
</dbReference>
<dbReference type="Gene3D" id="1.10.287.130">
    <property type="match status" value="1"/>
</dbReference>
<dbReference type="Gene3D" id="6.10.340.10">
    <property type="match status" value="1"/>
</dbReference>
<dbReference type="Gene3D" id="3.30.565.10">
    <property type="entry name" value="Histidine kinase-like ATPase, C-terminal domain"/>
    <property type="match status" value="1"/>
</dbReference>
<dbReference type="InterPro" id="IPR048590">
    <property type="entry name" value="CusS-like_sensor"/>
</dbReference>
<dbReference type="InterPro" id="IPR006290">
    <property type="entry name" value="CztS_silS_copS"/>
</dbReference>
<dbReference type="InterPro" id="IPR003660">
    <property type="entry name" value="HAMP_dom"/>
</dbReference>
<dbReference type="InterPro" id="IPR036890">
    <property type="entry name" value="HATPase_C_sf"/>
</dbReference>
<dbReference type="InterPro" id="IPR005467">
    <property type="entry name" value="His_kinase_dom"/>
</dbReference>
<dbReference type="InterPro" id="IPR003661">
    <property type="entry name" value="HisK_dim/P_dom"/>
</dbReference>
<dbReference type="InterPro" id="IPR036097">
    <property type="entry name" value="HisK_dim/P_sf"/>
</dbReference>
<dbReference type="InterPro" id="IPR004358">
    <property type="entry name" value="Sig_transdc_His_kin-like_C"/>
</dbReference>
<dbReference type="InterPro" id="IPR050428">
    <property type="entry name" value="TCS_sensor_his_kinase"/>
</dbReference>
<dbReference type="NCBIfam" id="TIGR01386">
    <property type="entry name" value="cztS_silS_copS"/>
    <property type="match status" value="1"/>
</dbReference>
<dbReference type="NCBIfam" id="NF007345">
    <property type="entry name" value="PRK09835.1"/>
    <property type="match status" value="1"/>
</dbReference>
<dbReference type="PANTHER" id="PTHR45436:SF15">
    <property type="entry name" value="SENSOR HISTIDINE KINASE CUSS"/>
    <property type="match status" value="1"/>
</dbReference>
<dbReference type="PANTHER" id="PTHR45436">
    <property type="entry name" value="SENSOR HISTIDINE KINASE YKOH"/>
    <property type="match status" value="1"/>
</dbReference>
<dbReference type="Pfam" id="PF21085">
    <property type="entry name" value="CusS"/>
    <property type="match status" value="1"/>
</dbReference>
<dbReference type="Pfam" id="PF00672">
    <property type="entry name" value="HAMP"/>
    <property type="match status" value="1"/>
</dbReference>
<dbReference type="Pfam" id="PF02518">
    <property type="entry name" value="HATPase_c"/>
    <property type="match status" value="1"/>
</dbReference>
<dbReference type="Pfam" id="PF00512">
    <property type="entry name" value="HisKA"/>
    <property type="match status" value="1"/>
</dbReference>
<dbReference type="PRINTS" id="PR00344">
    <property type="entry name" value="BCTRLSENSOR"/>
</dbReference>
<dbReference type="SMART" id="SM00304">
    <property type="entry name" value="HAMP"/>
    <property type="match status" value="1"/>
</dbReference>
<dbReference type="SMART" id="SM00387">
    <property type="entry name" value="HATPase_c"/>
    <property type="match status" value="1"/>
</dbReference>
<dbReference type="SMART" id="SM00388">
    <property type="entry name" value="HisKA"/>
    <property type="match status" value="1"/>
</dbReference>
<dbReference type="SUPFAM" id="SSF55874">
    <property type="entry name" value="ATPase domain of HSP90 chaperone/DNA topoisomerase II/histidine kinase"/>
    <property type="match status" value="1"/>
</dbReference>
<dbReference type="SUPFAM" id="SSF47384">
    <property type="entry name" value="Homodimeric domain of signal transducing histidine kinase"/>
    <property type="match status" value="1"/>
</dbReference>
<dbReference type="PROSITE" id="PS50885">
    <property type="entry name" value="HAMP"/>
    <property type="match status" value="1"/>
</dbReference>
<dbReference type="PROSITE" id="PS50109">
    <property type="entry name" value="HIS_KIN"/>
    <property type="match status" value="1"/>
</dbReference>
<name>CUSS_ECO57</name>
<proteinExistence type="inferred from homology"/>
<gene>
    <name type="primary">cusS</name>
    <name type="ordered locus">Z0708</name>
    <name type="ordered locus">ECs0608</name>
</gene>
<evidence type="ECO:0000250" key="1">
    <source>
        <dbReference type="UniProtKB" id="P77485"/>
    </source>
</evidence>
<evidence type="ECO:0000255" key="2"/>
<evidence type="ECO:0000255" key="3">
    <source>
        <dbReference type="PROSITE-ProRule" id="PRU00102"/>
    </source>
</evidence>
<evidence type="ECO:0000255" key="4">
    <source>
        <dbReference type="PROSITE-ProRule" id="PRU00107"/>
    </source>
</evidence>
<reference key="1">
    <citation type="journal article" date="2001" name="Nature">
        <title>Genome sequence of enterohaemorrhagic Escherichia coli O157:H7.</title>
        <authorList>
            <person name="Perna N.T."/>
            <person name="Plunkett G. III"/>
            <person name="Burland V."/>
            <person name="Mau B."/>
            <person name="Glasner J.D."/>
            <person name="Rose D.J."/>
            <person name="Mayhew G.F."/>
            <person name="Evans P.S."/>
            <person name="Gregor J."/>
            <person name="Kirkpatrick H.A."/>
            <person name="Posfai G."/>
            <person name="Hackett J."/>
            <person name="Klink S."/>
            <person name="Boutin A."/>
            <person name="Shao Y."/>
            <person name="Miller L."/>
            <person name="Grotbeck E.J."/>
            <person name="Davis N.W."/>
            <person name="Lim A."/>
            <person name="Dimalanta E.T."/>
            <person name="Potamousis K."/>
            <person name="Apodaca J."/>
            <person name="Anantharaman T.S."/>
            <person name="Lin J."/>
            <person name="Yen G."/>
            <person name="Schwartz D.C."/>
            <person name="Welch R.A."/>
            <person name="Blattner F.R."/>
        </authorList>
    </citation>
    <scope>NUCLEOTIDE SEQUENCE [LARGE SCALE GENOMIC DNA]</scope>
    <source>
        <strain>O157:H7 / EDL933 / ATCC 700927 / EHEC</strain>
    </source>
</reference>
<reference key="2">
    <citation type="journal article" date="2001" name="DNA Res.">
        <title>Complete genome sequence of enterohemorrhagic Escherichia coli O157:H7 and genomic comparison with a laboratory strain K-12.</title>
        <authorList>
            <person name="Hayashi T."/>
            <person name="Makino K."/>
            <person name="Ohnishi M."/>
            <person name="Kurokawa K."/>
            <person name="Ishii K."/>
            <person name="Yokoyama K."/>
            <person name="Han C.-G."/>
            <person name="Ohtsubo E."/>
            <person name="Nakayama K."/>
            <person name="Murata T."/>
            <person name="Tanaka M."/>
            <person name="Tobe T."/>
            <person name="Iida T."/>
            <person name="Takami H."/>
            <person name="Honda T."/>
            <person name="Sasakawa C."/>
            <person name="Ogasawara N."/>
            <person name="Yasunaga T."/>
            <person name="Kuhara S."/>
            <person name="Shiba T."/>
            <person name="Hattori M."/>
            <person name="Shinagawa H."/>
        </authorList>
    </citation>
    <scope>NUCLEOTIDE SEQUENCE [LARGE SCALE GENOMIC DNA]</scope>
    <source>
        <strain>O157:H7 / Sakai / RIMD 0509952 / EHEC</strain>
    </source>
</reference>
<keyword id="KW-0067">ATP-binding</keyword>
<keyword id="KW-0997">Cell inner membrane</keyword>
<keyword id="KW-1003">Cell membrane</keyword>
<keyword id="KW-0186">Copper</keyword>
<keyword id="KW-0418">Kinase</keyword>
<keyword id="KW-0472">Membrane</keyword>
<keyword id="KW-0547">Nucleotide-binding</keyword>
<keyword id="KW-0597">Phosphoprotein</keyword>
<keyword id="KW-1185">Reference proteome</keyword>
<keyword id="KW-0808">Transferase</keyword>
<keyword id="KW-0812">Transmembrane</keyword>
<keyword id="KW-1133">Transmembrane helix</keyword>
<keyword id="KW-0902">Two-component regulatory system</keyword>
<sequence length="482" mass="53909">MVSKPFQRPFSLATRLTFFISLATIAAFFAFAWIMIHSVKVHFAEQDINDLKEISATLERVLNHPDETQARRLMTLEDIVSGYSNVLISLADSHGKTVYHSPGAPDIREFARDAIPDKDARGGEVFLLSGPTMMMPGHGHGHMEHSNWRMISLPVGPLVDGKPIYTLYIALSIDFHLHYINDLMNKLIMTASVISILIVFIVLLAVHKGHAPIRSVSRQIQNITSKDLDVRLDPQTVPIELEQLVLSFNHMIERIEDVFTRQSNFSADIAHEIRTPITNLITQTEIALSQSRSQKELEDVLYSNLEELTRMAKMVSDMLFLAQADNNQLIPEKKMLNLADEVGKVFDFFEALAEDRGVELQFVGDECQVAGDPLMLRRALSNLLSNALRYTPPGEAIVVRCQTVDHLVQVIVENPGTPIAPEHLPRLFDRFYRVDPSRQRKGEGSGIGLAIVKSIVVAHKGTVAVTSNARGTRFVIVLPERG</sequence>
<organism>
    <name type="scientific">Escherichia coli O157:H7</name>
    <dbReference type="NCBI Taxonomy" id="83334"/>
    <lineage>
        <taxon>Bacteria</taxon>
        <taxon>Pseudomonadati</taxon>
        <taxon>Pseudomonadota</taxon>
        <taxon>Gammaproteobacteria</taxon>
        <taxon>Enterobacterales</taxon>
        <taxon>Enterobacteriaceae</taxon>
        <taxon>Escherichia</taxon>
    </lineage>
</organism>